<reference key="1">
    <citation type="submission" date="2006-01" db="EMBL/GenBank/DDBJ databases">
        <title>Complete sequence of Novosphingobium aromaticivorans DSM 12444.</title>
        <authorList>
            <consortium name="US DOE Joint Genome Institute"/>
            <person name="Copeland A."/>
            <person name="Lucas S."/>
            <person name="Lapidus A."/>
            <person name="Barry K."/>
            <person name="Detter J.C."/>
            <person name="Glavina T."/>
            <person name="Hammon N."/>
            <person name="Israni S."/>
            <person name="Pitluck S."/>
            <person name="Chain P."/>
            <person name="Malfatti S."/>
            <person name="Shin M."/>
            <person name="Vergez L."/>
            <person name="Schmutz J."/>
            <person name="Larimer F."/>
            <person name="Land M."/>
            <person name="Kyrpides N."/>
            <person name="Ivanova N."/>
            <person name="Fredrickson J."/>
            <person name="Balkwill D."/>
            <person name="Romine M.F."/>
            <person name="Richardson P."/>
        </authorList>
    </citation>
    <scope>NUCLEOTIDE SEQUENCE [LARGE SCALE GENOMIC DNA]</scope>
    <source>
        <strain>ATCC 700278 / DSM 12444 / CCUG 56034 / CIP 105152 / NBRC 16084 / F199</strain>
    </source>
</reference>
<gene>
    <name evidence="1" type="primary">ybeY</name>
    <name type="ordered locus">Saro_0980</name>
</gene>
<feature type="chain" id="PRO_0000284260" description="Endoribonuclease YbeY">
    <location>
        <begin position="1"/>
        <end position="167"/>
    </location>
</feature>
<feature type="binding site" evidence="1">
    <location>
        <position position="126"/>
    </location>
    <ligand>
        <name>Zn(2+)</name>
        <dbReference type="ChEBI" id="CHEBI:29105"/>
        <note>catalytic</note>
    </ligand>
</feature>
<feature type="binding site" evidence="1">
    <location>
        <position position="130"/>
    </location>
    <ligand>
        <name>Zn(2+)</name>
        <dbReference type="ChEBI" id="CHEBI:29105"/>
        <note>catalytic</note>
    </ligand>
</feature>
<feature type="binding site" evidence="1">
    <location>
        <position position="136"/>
    </location>
    <ligand>
        <name>Zn(2+)</name>
        <dbReference type="ChEBI" id="CHEBI:29105"/>
        <note>catalytic</note>
    </ligand>
</feature>
<keyword id="KW-0963">Cytoplasm</keyword>
<keyword id="KW-0255">Endonuclease</keyword>
<keyword id="KW-0378">Hydrolase</keyword>
<keyword id="KW-0479">Metal-binding</keyword>
<keyword id="KW-0540">Nuclease</keyword>
<keyword id="KW-1185">Reference proteome</keyword>
<keyword id="KW-0690">Ribosome biogenesis</keyword>
<keyword id="KW-0698">rRNA processing</keyword>
<keyword id="KW-0862">Zinc</keyword>
<evidence type="ECO:0000255" key="1">
    <source>
        <dbReference type="HAMAP-Rule" id="MF_00009"/>
    </source>
</evidence>
<name>YBEY_NOVAD</name>
<sequence length="167" mass="18018">MSAPILEMDIDPVWGDAIDWEDIASRAAEAAAKVAPELAHENLLVSVVLADDDEVHALNKQWRAKDKPTNVLSFPMLSREEVLHAAADEGAPGMLGDMILAHGVCTREAAEKGVSVETHATHLVVHGLLHLAGYDHELGEAEAEEMENLERKALALMGIADPYAVED</sequence>
<proteinExistence type="inferred from homology"/>
<dbReference type="EC" id="3.1.-.-" evidence="1"/>
<dbReference type="EMBL" id="CP000248">
    <property type="protein sequence ID" value="ABD25425.1"/>
    <property type="molecule type" value="Genomic_DNA"/>
</dbReference>
<dbReference type="RefSeq" id="WP_011444639.1">
    <property type="nucleotide sequence ID" value="NC_007794.1"/>
</dbReference>
<dbReference type="SMR" id="Q2G9P8"/>
<dbReference type="STRING" id="279238.Saro_0980"/>
<dbReference type="KEGG" id="nar:Saro_0980"/>
<dbReference type="eggNOG" id="COG0319">
    <property type="taxonomic scope" value="Bacteria"/>
</dbReference>
<dbReference type="HOGENOM" id="CLU_106710_0_0_5"/>
<dbReference type="Proteomes" id="UP000009134">
    <property type="component" value="Chromosome"/>
</dbReference>
<dbReference type="GO" id="GO:0005737">
    <property type="term" value="C:cytoplasm"/>
    <property type="evidence" value="ECO:0007669"/>
    <property type="project" value="UniProtKB-SubCell"/>
</dbReference>
<dbReference type="GO" id="GO:0004222">
    <property type="term" value="F:metalloendopeptidase activity"/>
    <property type="evidence" value="ECO:0007669"/>
    <property type="project" value="InterPro"/>
</dbReference>
<dbReference type="GO" id="GO:0004521">
    <property type="term" value="F:RNA endonuclease activity"/>
    <property type="evidence" value="ECO:0007669"/>
    <property type="project" value="UniProtKB-UniRule"/>
</dbReference>
<dbReference type="GO" id="GO:0008270">
    <property type="term" value="F:zinc ion binding"/>
    <property type="evidence" value="ECO:0007669"/>
    <property type="project" value="UniProtKB-UniRule"/>
</dbReference>
<dbReference type="GO" id="GO:0006364">
    <property type="term" value="P:rRNA processing"/>
    <property type="evidence" value="ECO:0007669"/>
    <property type="project" value="UniProtKB-UniRule"/>
</dbReference>
<dbReference type="Gene3D" id="3.40.390.30">
    <property type="entry name" value="Metalloproteases ('zincins'), catalytic domain"/>
    <property type="match status" value="1"/>
</dbReference>
<dbReference type="HAMAP" id="MF_00009">
    <property type="entry name" value="Endoribonucl_YbeY"/>
    <property type="match status" value="1"/>
</dbReference>
<dbReference type="InterPro" id="IPR023091">
    <property type="entry name" value="MetalPrtase_cat_dom_sf_prd"/>
</dbReference>
<dbReference type="InterPro" id="IPR002036">
    <property type="entry name" value="YbeY"/>
</dbReference>
<dbReference type="InterPro" id="IPR020549">
    <property type="entry name" value="YbeY_CS"/>
</dbReference>
<dbReference type="NCBIfam" id="TIGR00043">
    <property type="entry name" value="rRNA maturation RNase YbeY"/>
    <property type="match status" value="1"/>
</dbReference>
<dbReference type="PANTHER" id="PTHR46986">
    <property type="entry name" value="ENDORIBONUCLEASE YBEY, CHLOROPLASTIC"/>
    <property type="match status" value="1"/>
</dbReference>
<dbReference type="PANTHER" id="PTHR46986:SF1">
    <property type="entry name" value="ENDORIBONUCLEASE YBEY, CHLOROPLASTIC"/>
    <property type="match status" value="1"/>
</dbReference>
<dbReference type="Pfam" id="PF02130">
    <property type="entry name" value="YbeY"/>
    <property type="match status" value="1"/>
</dbReference>
<dbReference type="SUPFAM" id="SSF55486">
    <property type="entry name" value="Metalloproteases ('zincins'), catalytic domain"/>
    <property type="match status" value="1"/>
</dbReference>
<dbReference type="PROSITE" id="PS01306">
    <property type="entry name" value="UPF0054"/>
    <property type="match status" value="1"/>
</dbReference>
<accession>Q2G9P8</accession>
<protein>
    <recommendedName>
        <fullName evidence="1">Endoribonuclease YbeY</fullName>
        <ecNumber evidence="1">3.1.-.-</ecNumber>
    </recommendedName>
</protein>
<organism>
    <name type="scientific">Novosphingobium aromaticivorans (strain ATCC 700278 / DSM 12444 / CCUG 56034 / CIP 105152 / NBRC 16084 / F199)</name>
    <dbReference type="NCBI Taxonomy" id="279238"/>
    <lineage>
        <taxon>Bacteria</taxon>
        <taxon>Pseudomonadati</taxon>
        <taxon>Pseudomonadota</taxon>
        <taxon>Alphaproteobacteria</taxon>
        <taxon>Sphingomonadales</taxon>
        <taxon>Sphingomonadaceae</taxon>
        <taxon>Novosphingobium</taxon>
    </lineage>
</organism>
<comment type="function">
    <text evidence="1">Single strand-specific metallo-endoribonuclease involved in late-stage 70S ribosome quality control and in maturation of the 3' terminus of the 16S rRNA.</text>
</comment>
<comment type="cofactor">
    <cofactor evidence="1">
        <name>Zn(2+)</name>
        <dbReference type="ChEBI" id="CHEBI:29105"/>
    </cofactor>
    <text evidence="1">Binds 1 zinc ion.</text>
</comment>
<comment type="subcellular location">
    <subcellularLocation>
        <location evidence="1">Cytoplasm</location>
    </subcellularLocation>
</comment>
<comment type="similarity">
    <text evidence="1">Belongs to the endoribonuclease YbeY family.</text>
</comment>